<name>MUG_ECO81</name>
<proteinExistence type="inferred from homology"/>
<gene>
    <name evidence="1" type="primary">mug</name>
    <name type="ordered locus">ECED1_3737</name>
</gene>
<reference key="1">
    <citation type="journal article" date="2009" name="PLoS Genet.">
        <title>Organised genome dynamics in the Escherichia coli species results in highly diverse adaptive paths.</title>
        <authorList>
            <person name="Touchon M."/>
            <person name="Hoede C."/>
            <person name="Tenaillon O."/>
            <person name="Barbe V."/>
            <person name="Baeriswyl S."/>
            <person name="Bidet P."/>
            <person name="Bingen E."/>
            <person name="Bonacorsi S."/>
            <person name="Bouchier C."/>
            <person name="Bouvet O."/>
            <person name="Calteau A."/>
            <person name="Chiapello H."/>
            <person name="Clermont O."/>
            <person name="Cruveiller S."/>
            <person name="Danchin A."/>
            <person name="Diard M."/>
            <person name="Dossat C."/>
            <person name="Karoui M.E."/>
            <person name="Frapy E."/>
            <person name="Garry L."/>
            <person name="Ghigo J.M."/>
            <person name="Gilles A.M."/>
            <person name="Johnson J."/>
            <person name="Le Bouguenec C."/>
            <person name="Lescat M."/>
            <person name="Mangenot S."/>
            <person name="Martinez-Jehanne V."/>
            <person name="Matic I."/>
            <person name="Nassif X."/>
            <person name="Oztas S."/>
            <person name="Petit M.A."/>
            <person name="Pichon C."/>
            <person name="Rouy Z."/>
            <person name="Ruf C.S."/>
            <person name="Schneider D."/>
            <person name="Tourret J."/>
            <person name="Vacherie B."/>
            <person name="Vallenet D."/>
            <person name="Medigue C."/>
            <person name="Rocha E.P.C."/>
            <person name="Denamur E."/>
        </authorList>
    </citation>
    <scope>NUCLEOTIDE SEQUENCE [LARGE SCALE GENOMIC DNA]</scope>
    <source>
        <strain>ED1a</strain>
    </source>
</reference>
<sequence length="168" mass="18673">MVEDILAPGLRVVFCGINPGLSSAGTGFPFAHPANRFWKVIYQAGFTDRQLKPQEAQHLLDYRCGVTKLVDRPTVQANEVSKQELHAGGRKLIEKIEDYQPQALAILGKQAYEQGFSQRGAQWGKQTLTIGSTQIWVLPNPSGLSRVSLEKLVEAYRELDQALVVRGR</sequence>
<comment type="function">
    <text evidence="1">Excises ethenocytosine and uracil, which can arise by alkylation or deamination of cytosine, respectively, from the corresponding mispairs with guanine in ds-DNA. It is capable of hydrolyzing the carbon-nitrogen bond between the sugar-phosphate backbone of the DNA and the mispaired base. The complementary strand guanine functions in substrate recognition. Required for DNA damage lesion repair in stationary-phase cells.</text>
</comment>
<comment type="catalytic activity">
    <reaction evidence="1">
        <text>Specifically hydrolyzes mismatched double-stranded DNA and polynucleotides, releasing free uracil.</text>
        <dbReference type="EC" id="3.2.2.28"/>
    </reaction>
</comment>
<comment type="subunit">
    <text evidence="1">Binds DNA as a monomer.</text>
</comment>
<comment type="subcellular location">
    <subcellularLocation>
        <location evidence="1">Cytoplasm</location>
    </subcellularLocation>
</comment>
<comment type="similarity">
    <text evidence="1">Belongs to the uracil-DNA glycosylase (UDG) superfamily. TDG/mug family.</text>
</comment>
<dbReference type="EC" id="3.2.2.28" evidence="1"/>
<dbReference type="EMBL" id="CU928162">
    <property type="protein sequence ID" value="CAR09886.2"/>
    <property type="molecule type" value="Genomic_DNA"/>
</dbReference>
<dbReference type="RefSeq" id="WP_000228937.1">
    <property type="nucleotide sequence ID" value="NC_011745.1"/>
</dbReference>
<dbReference type="SMR" id="B7N0L8"/>
<dbReference type="GeneID" id="93778924"/>
<dbReference type="KEGG" id="ecq:ECED1_3737"/>
<dbReference type="HOGENOM" id="CLU_042829_3_1_6"/>
<dbReference type="Proteomes" id="UP000000748">
    <property type="component" value="Chromosome"/>
</dbReference>
<dbReference type="GO" id="GO:0005737">
    <property type="term" value="C:cytoplasm"/>
    <property type="evidence" value="ECO:0007669"/>
    <property type="project" value="UniProtKB-SubCell"/>
</dbReference>
<dbReference type="GO" id="GO:0003677">
    <property type="term" value="F:DNA binding"/>
    <property type="evidence" value="ECO:0007669"/>
    <property type="project" value="UniProtKB-KW"/>
</dbReference>
<dbReference type="GO" id="GO:0008263">
    <property type="term" value="F:pyrimidine-specific mismatch base pair DNA N-glycosylase activity"/>
    <property type="evidence" value="ECO:0007669"/>
    <property type="project" value="UniProtKB-UniRule"/>
</dbReference>
<dbReference type="GO" id="GO:0004844">
    <property type="term" value="F:uracil DNA N-glycosylase activity"/>
    <property type="evidence" value="ECO:0007669"/>
    <property type="project" value="TreeGrafter"/>
</dbReference>
<dbReference type="GO" id="GO:0006285">
    <property type="term" value="P:base-excision repair, AP site formation"/>
    <property type="evidence" value="ECO:0007669"/>
    <property type="project" value="UniProtKB-UniRule"/>
</dbReference>
<dbReference type="CDD" id="cd10028">
    <property type="entry name" value="UDG-F2_TDG_MUG"/>
    <property type="match status" value="1"/>
</dbReference>
<dbReference type="FunFam" id="3.40.470.10:FF:000003">
    <property type="entry name" value="G/U mismatch-specific DNA glycosylase"/>
    <property type="match status" value="1"/>
</dbReference>
<dbReference type="Gene3D" id="3.40.470.10">
    <property type="entry name" value="Uracil-DNA glycosylase-like domain"/>
    <property type="match status" value="1"/>
</dbReference>
<dbReference type="HAMAP" id="MF_01956">
    <property type="entry name" value="MUG"/>
    <property type="match status" value="1"/>
</dbReference>
<dbReference type="InterPro" id="IPR015637">
    <property type="entry name" value="MUG/TDG"/>
</dbReference>
<dbReference type="InterPro" id="IPR023502">
    <property type="entry name" value="MUG_bact"/>
</dbReference>
<dbReference type="InterPro" id="IPR005122">
    <property type="entry name" value="Uracil-DNA_glycosylase-like"/>
</dbReference>
<dbReference type="InterPro" id="IPR036895">
    <property type="entry name" value="Uracil-DNA_glycosylase-like_sf"/>
</dbReference>
<dbReference type="NCBIfam" id="NF007570">
    <property type="entry name" value="PRK10201.1"/>
    <property type="match status" value="1"/>
</dbReference>
<dbReference type="PANTHER" id="PTHR12159">
    <property type="entry name" value="G/T AND G/U MISMATCH-SPECIFIC DNA GLYCOSYLASE"/>
    <property type="match status" value="1"/>
</dbReference>
<dbReference type="PANTHER" id="PTHR12159:SF9">
    <property type="entry name" value="G_T MISMATCH-SPECIFIC THYMINE DNA GLYCOSYLASE"/>
    <property type="match status" value="1"/>
</dbReference>
<dbReference type="Pfam" id="PF03167">
    <property type="entry name" value="UDG"/>
    <property type="match status" value="1"/>
</dbReference>
<dbReference type="SUPFAM" id="SSF52141">
    <property type="entry name" value="Uracil-DNA glycosylase-like"/>
    <property type="match status" value="1"/>
</dbReference>
<protein>
    <recommendedName>
        <fullName evidence="1">G/U mismatch-specific DNA glycosylase</fullName>
        <ecNumber evidence="1">3.2.2.28</ecNumber>
    </recommendedName>
    <alternativeName>
        <fullName evidence="1">Double-strand-specific uracil glycosylase</fullName>
    </alternativeName>
    <alternativeName>
        <fullName evidence="1">Mismatch-specific uracil DNA-glycosylase</fullName>
        <shortName evidence="1">MUG</shortName>
    </alternativeName>
</protein>
<organism>
    <name type="scientific">Escherichia coli O81 (strain ED1a)</name>
    <dbReference type="NCBI Taxonomy" id="585397"/>
    <lineage>
        <taxon>Bacteria</taxon>
        <taxon>Pseudomonadati</taxon>
        <taxon>Pseudomonadota</taxon>
        <taxon>Gammaproteobacteria</taxon>
        <taxon>Enterobacterales</taxon>
        <taxon>Enterobacteriaceae</taxon>
        <taxon>Escherichia</taxon>
    </lineage>
</organism>
<accession>B7N0L8</accession>
<evidence type="ECO:0000255" key="1">
    <source>
        <dbReference type="HAMAP-Rule" id="MF_01956"/>
    </source>
</evidence>
<keyword id="KW-0963">Cytoplasm</keyword>
<keyword id="KW-0227">DNA damage</keyword>
<keyword id="KW-0228">DNA excision</keyword>
<keyword id="KW-0234">DNA repair</keyword>
<keyword id="KW-0238">DNA-binding</keyword>
<keyword id="KW-0378">Hydrolase</keyword>
<feature type="chain" id="PRO_1000188954" description="G/U mismatch-specific DNA glycosylase">
    <location>
        <begin position="1"/>
        <end position="168"/>
    </location>
</feature>